<feature type="chain" id="PRO_0000305115" description="Delta-actitoxin-Axm1f">
    <location>
        <begin position="1"/>
        <end position="47"/>
    </location>
</feature>
<feature type="disulfide bond" evidence="1">
    <location>
        <begin position="4"/>
        <end position="44"/>
    </location>
</feature>
<feature type="disulfide bond" evidence="1">
    <location>
        <begin position="6"/>
        <end position="34"/>
    </location>
</feature>
<feature type="disulfide bond" evidence="1">
    <location>
        <begin position="27"/>
        <end position="45"/>
    </location>
</feature>
<keyword id="KW-0123">Cardiotoxin</keyword>
<keyword id="KW-1015">Disulfide bond</keyword>
<keyword id="KW-0872">Ion channel impairing toxin</keyword>
<keyword id="KW-0166">Nematocyst</keyword>
<keyword id="KW-0528">Neurotoxin</keyword>
<keyword id="KW-0964">Secreted</keyword>
<keyword id="KW-0800">Toxin</keyword>
<keyword id="KW-0738">Voltage-gated sodium channel impairing toxin</keyword>
<organism>
    <name type="scientific">Anthopleura xanthogrammica</name>
    <name type="common">Giant green sea anemone</name>
    <name type="synonym">Actinia xanthogrammica</name>
    <dbReference type="NCBI Taxonomy" id="6112"/>
    <lineage>
        <taxon>Eukaryota</taxon>
        <taxon>Metazoa</taxon>
        <taxon>Cnidaria</taxon>
        <taxon>Anthozoa</taxon>
        <taxon>Hexacorallia</taxon>
        <taxon>Actiniaria</taxon>
        <taxon>Actiniidae</taxon>
        <taxon>Anthopleura</taxon>
    </lineage>
</organism>
<comment type="function">
    <text evidence="2">Binds specifically to voltage-gated sodium channels (Nav) (site 3), thereby delaying their inactivation during signal transduction. Thus it may strongly stimulate mammalian cardiac muscle contraction.</text>
</comment>
<comment type="subcellular location">
    <subcellularLocation>
        <location evidence="5">Secreted</location>
    </subcellularLocation>
    <subcellularLocation>
        <location evidence="5">Nematocyst</location>
    </subcellularLocation>
</comment>
<comment type="similarity">
    <text evidence="5">Belongs to the sea anemone sodium channel inhibitory toxin family. Type I subfamily.</text>
</comment>
<reference key="1">
    <citation type="journal article" date="1998" name="Toxicon">
        <title>Identification and characterization of novel sodium channel toxins from the sea anemone Anthopleura xanthogrammica.</title>
        <authorList>
            <person name="Kelso G.J."/>
            <person name="Blumenthal K.M."/>
        </authorList>
    </citation>
    <scope>NUCLEOTIDE SEQUENCE [MRNA]</scope>
    <scope>FUNCTION</scope>
    <source>
        <tissue>Tentacle</tissue>
    </source>
</reference>
<reference key="2">
    <citation type="journal article" date="2012" name="Toxicon">
        <title>Development of a rational nomenclature for naming peptide and protein toxins from sea anemones.</title>
        <authorList>
            <person name="Oliveira J.S."/>
            <person name="Fuentes-Silva D."/>
            <person name="King G.F."/>
        </authorList>
    </citation>
    <scope>NOMENCLATURE</scope>
</reference>
<name>NA14_ANTXA</name>
<proteinExistence type="evidence at transcript level"/>
<evidence type="ECO:0000250" key="1">
    <source>
        <dbReference type="UniProtKB" id="P10454"/>
    </source>
</evidence>
<evidence type="ECO:0000269" key="2">
    <source>
    </source>
</evidence>
<evidence type="ECO:0000303" key="3">
    <source>
    </source>
</evidence>
<evidence type="ECO:0000303" key="4">
    <source>
    </source>
</evidence>
<evidence type="ECO:0000305" key="5"/>
<accession>P0C5G1</accession>
<protein>
    <recommendedName>
        <fullName evidence="3">Delta-actitoxin-Axm1f</fullName>
        <shortName evidence="3">Delta-AITX-Axm1f</shortName>
    </recommendedName>
    <alternativeName>
        <fullName evidence="4">PCR2-10</fullName>
    </alternativeName>
    <alternativeName>
        <fullName evidence="5">Toxin PCR4</fullName>
    </alternativeName>
</protein>
<sequence>GVPCLCDSDGPSVRGNSLSGIIWLFGCPSGWHNCRDHGPTIGWCCKK</sequence>
<dbReference type="SMR" id="P0C5G1"/>
<dbReference type="GO" id="GO:0005576">
    <property type="term" value="C:extracellular region"/>
    <property type="evidence" value="ECO:0007669"/>
    <property type="project" value="UniProtKB-SubCell"/>
</dbReference>
<dbReference type="GO" id="GO:0042151">
    <property type="term" value="C:nematocyst"/>
    <property type="evidence" value="ECO:0007669"/>
    <property type="project" value="UniProtKB-SubCell"/>
</dbReference>
<dbReference type="GO" id="GO:0017080">
    <property type="term" value="F:sodium channel regulator activity"/>
    <property type="evidence" value="ECO:0007669"/>
    <property type="project" value="UniProtKB-KW"/>
</dbReference>
<dbReference type="GO" id="GO:0090729">
    <property type="term" value="F:toxin activity"/>
    <property type="evidence" value="ECO:0007669"/>
    <property type="project" value="UniProtKB-KW"/>
</dbReference>
<dbReference type="GO" id="GO:0009966">
    <property type="term" value="P:regulation of signal transduction"/>
    <property type="evidence" value="ECO:0007669"/>
    <property type="project" value="InterPro"/>
</dbReference>
<dbReference type="Gene3D" id="2.20.20.10">
    <property type="entry name" value="Anthopleurin-A"/>
    <property type="match status" value="1"/>
</dbReference>
<dbReference type="InterPro" id="IPR000693">
    <property type="entry name" value="Anenome_toxin"/>
</dbReference>
<dbReference type="InterPro" id="IPR023355">
    <property type="entry name" value="Myo_ane_neurotoxin_sf"/>
</dbReference>
<dbReference type="Pfam" id="PF00706">
    <property type="entry name" value="Toxin_4"/>
    <property type="match status" value="1"/>
</dbReference>
<dbReference type="PIRSF" id="PIRSF001905">
    <property type="entry name" value="Anenome_toxin"/>
    <property type="match status" value="1"/>
</dbReference>
<dbReference type="SUPFAM" id="SSF57392">
    <property type="entry name" value="Defensin-like"/>
    <property type="match status" value="1"/>
</dbReference>